<gene>
    <name evidence="1" type="primary">hslU</name>
    <name type="ordered locus">Arad_0063</name>
</gene>
<sequence length="436" mass="48172">MTTFSPREIVSELDRYIVGQHEAKRAVAIALRNRWRRQQLEPDLRDEVMPKNILMIGPTGVGKTEISRRLAKLAGAPFIKVEATKFTEVGYVGRDVEQIIRDLVEVGIGLVREKKRAEVQAKAHMSAEERVLDALVGATASPATRDSFRKKLRDGQLDDKEIDIEVADTGSGMPGGFEIPGMPGANIGVLNLSEMFGKAMGGRTKKVRTTVKDSYKELVRDESDKLIDNEAIQREAVRSAEDDGIVFLDEIDKIAARDGGMGAGVSREGVQRDLLPLVEGTTVSTKYGPVKTDHILFIASGAFHVSKPSDLLPELQGRLPIRVELRPLTKEDFRRILTEPEASLIRQYKALMETEDLKLDFTDDAIDALADVAVHLNSTVENIGARRLQTVMERVLDEISYNASDRAGVSVTIDAAYVREHVGDLANNTDLSRFIL</sequence>
<proteinExistence type="inferred from homology"/>
<comment type="function">
    <text evidence="1">ATPase subunit of a proteasome-like degradation complex; this subunit has chaperone activity. The binding of ATP and its subsequent hydrolysis by HslU are essential for unfolding of protein substrates subsequently hydrolyzed by HslV. HslU recognizes the N-terminal part of its protein substrates and unfolds these before they are guided to HslV for hydrolysis.</text>
</comment>
<comment type="subunit">
    <text evidence="1">A double ring-shaped homohexamer of HslV is capped on each side by a ring-shaped HslU homohexamer. The assembly of the HslU/HslV complex is dependent on binding of ATP.</text>
</comment>
<comment type="subcellular location">
    <subcellularLocation>
        <location evidence="1">Cytoplasm</location>
    </subcellularLocation>
</comment>
<comment type="similarity">
    <text evidence="1">Belongs to the ClpX chaperone family. HslU subfamily.</text>
</comment>
<feature type="chain" id="PRO_1000125423" description="ATP-dependent protease ATPase subunit HslU">
    <location>
        <begin position="1"/>
        <end position="436"/>
    </location>
</feature>
<feature type="binding site" evidence="1">
    <location>
        <position position="18"/>
    </location>
    <ligand>
        <name>ATP</name>
        <dbReference type="ChEBI" id="CHEBI:30616"/>
    </ligand>
</feature>
<feature type="binding site" evidence="1">
    <location>
        <begin position="60"/>
        <end position="65"/>
    </location>
    <ligand>
        <name>ATP</name>
        <dbReference type="ChEBI" id="CHEBI:30616"/>
    </ligand>
</feature>
<feature type="binding site" evidence="1">
    <location>
        <position position="249"/>
    </location>
    <ligand>
        <name>ATP</name>
        <dbReference type="ChEBI" id="CHEBI:30616"/>
    </ligand>
</feature>
<feature type="binding site" evidence="1">
    <location>
        <position position="314"/>
    </location>
    <ligand>
        <name>ATP</name>
        <dbReference type="ChEBI" id="CHEBI:30616"/>
    </ligand>
</feature>
<feature type="binding site" evidence="1">
    <location>
        <position position="386"/>
    </location>
    <ligand>
        <name>ATP</name>
        <dbReference type="ChEBI" id="CHEBI:30616"/>
    </ligand>
</feature>
<dbReference type="EMBL" id="CP000628">
    <property type="protein sequence ID" value="ACM24854.1"/>
    <property type="molecule type" value="Genomic_DNA"/>
</dbReference>
<dbReference type="RefSeq" id="WP_007698531.1">
    <property type="nucleotide sequence ID" value="NC_011985.1"/>
</dbReference>
<dbReference type="SMR" id="B9JG71"/>
<dbReference type="STRING" id="311403.Arad_0063"/>
<dbReference type="GeneID" id="86850457"/>
<dbReference type="KEGG" id="ara:Arad_0063"/>
<dbReference type="eggNOG" id="COG1220">
    <property type="taxonomic scope" value="Bacteria"/>
</dbReference>
<dbReference type="HOGENOM" id="CLU_033123_0_0_5"/>
<dbReference type="Proteomes" id="UP000001600">
    <property type="component" value="Chromosome 1"/>
</dbReference>
<dbReference type="GO" id="GO:0009376">
    <property type="term" value="C:HslUV protease complex"/>
    <property type="evidence" value="ECO:0007669"/>
    <property type="project" value="UniProtKB-UniRule"/>
</dbReference>
<dbReference type="GO" id="GO:0005524">
    <property type="term" value="F:ATP binding"/>
    <property type="evidence" value="ECO:0007669"/>
    <property type="project" value="UniProtKB-UniRule"/>
</dbReference>
<dbReference type="GO" id="GO:0016887">
    <property type="term" value="F:ATP hydrolysis activity"/>
    <property type="evidence" value="ECO:0007669"/>
    <property type="project" value="InterPro"/>
</dbReference>
<dbReference type="GO" id="GO:0008233">
    <property type="term" value="F:peptidase activity"/>
    <property type="evidence" value="ECO:0007669"/>
    <property type="project" value="InterPro"/>
</dbReference>
<dbReference type="GO" id="GO:0036402">
    <property type="term" value="F:proteasome-activating activity"/>
    <property type="evidence" value="ECO:0007669"/>
    <property type="project" value="UniProtKB-UniRule"/>
</dbReference>
<dbReference type="GO" id="GO:0043335">
    <property type="term" value="P:protein unfolding"/>
    <property type="evidence" value="ECO:0007669"/>
    <property type="project" value="UniProtKB-UniRule"/>
</dbReference>
<dbReference type="GO" id="GO:0051603">
    <property type="term" value="P:proteolysis involved in protein catabolic process"/>
    <property type="evidence" value="ECO:0007669"/>
    <property type="project" value="TreeGrafter"/>
</dbReference>
<dbReference type="CDD" id="cd19498">
    <property type="entry name" value="RecA-like_HslU"/>
    <property type="match status" value="1"/>
</dbReference>
<dbReference type="FunFam" id="3.40.50.300:FF:000213">
    <property type="entry name" value="ATP-dependent protease ATPase subunit HslU"/>
    <property type="match status" value="1"/>
</dbReference>
<dbReference type="FunFam" id="3.40.50.300:FF:000220">
    <property type="entry name" value="ATP-dependent protease ATPase subunit HslU"/>
    <property type="match status" value="1"/>
</dbReference>
<dbReference type="Gene3D" id="1.10.8.60">
    <property type="match status" value="1"/>
</dbReference>
<dbReference type="Gene3D" id="3.40.50.300">
    <property type="entry name" value="P-loop containing nucleotide triphosphate hydrolases"/>
    <property type="match status" value="2"/>
</dbReference>
<dbReference type="HAMAP" id="MF_00249">
    <property type="entry name" value="HslU"/>
    <property type="match status" value="1"/>
</dbReference>
<dbReference type="InterPro" id="IPR003593">
    <property type="entry name" value="AAA+_ATPase"/>
</dbReference>
<dbReference type="InterPro" id="IPR050052">
    <property type="entry name" value="ATP-dep_Clp_protease_ClpX"/>
</dbReference>
<dbReference type="InterPro" id="IPR003959">
    <property type="entry name" value="ATPase_AAA_core"/>
</dbReference>
<dbReference type="InterPro" id="IPR019489">
    <property type="entry name" value="Clp_ATPase_C"/>
</dbReference>
<dbReference type="InterPro" id="IPR004491">
    <property type="entry name" value="HslU"/>
</dbReference>
<dbReference type="InterPro" id="IPR027417">
    <property type="entry name" value="P-loop_NTPase"/>
</dbReference>
<dbReference type="NCBIfam" id="TIGR00390">
    <property type="entry name" value="hslU"/>
    <property type="match status" value="1"/>
</dbReference>
<dbReference type="NCBIfam" id="NF003544">
    <property type="entry name" value="PRK05201.1"/>
    <property type="match status" value="1"/>
</dbReference>
<dbReference type="PANTHER" id="PTHR48102">
    <property type="entry name" value="ATP-DEPENDENT CLP PROTEASE ATP-BINDING SUBUNIT CLPX-LIKE, MITOCHONDRIAL-RELATED"/>
    <property type="match status" value="1"/>
</dbReference>
<dbReference type="PANTHER" id="PTHR48102:SF3">
    <property type="entry name" value="ATP-DEPENDENT PROTEASE ATPASE SUBUNIT HSLU"/>
    <property type="match status" value="1"/>
</dbReference>
<dbReference type="Pfam" id="PF00004">
    <property type="entry name" value="AAA"/>
    <property type="match status" value="1"/>
</dbReference>
<dbReference type="Pfam" id="PF07724">
    <property type="entry name" value="AAA_2"/>
    <property type="match status" value="1"/>
</dbReference>
<dbReference type="Pfam" id="PF10431">
    <property type="entry name" value="ClpB_D2-small"/>
    <property type="match status" value="1"/>
</dbReference>
<dbReference type="SMART" id="SM00382">
    <property type="entry name" value="AAA"/>
    <property type="match status" value="1"/>
</dbReference>
<dbReference type="SMART" id="SM01086">
    <property type="entry name" value="ClpB_D2-small"/>
    <property type="match status" value="1"/>
</dbReference>
<dbReference type="SUPFAM" id="SSF52540">
    <property type="entry name" value="P-loop containing nucleoside triphosphate hydrolases"/>
    <property type="match status" value="1"/>
</dbReference>
<evidence type="ECO:0000255" key="1">
    <source>
        <dbReference type="HAMAP-Rule" id="MF_00249"/>
    </source>
</evidence>
<reference key="1">
    <citation type="journal article" date="2009" name="J. Bacteriol.">
        <title>Genome sequences of three Agrobacterium biovars help elucidate the evolution of multichromosome genomes in bacteria.</title>
        <authorList>
            <person name="Slater S.C."/>
            <person name="Goldman B.S."/>
            <person name="Goodner B."/>
            <person name="Setubal J.C."/>
            <person name="Farrand S.K."/>
            <person name="Nester E.W."/>
            <person name="Burr T.J."/>
            <person name="Banta L."/>
            <person name="Dickerman A.W."/>
            <person name="Paulsen I."/>
            <person name="Otten L."/>
            <person name="Suen G."/>
            <person name="Welch R."/>
            <person name="Almeida N.F."/>
            <person name="Arnold F."/>
            <person name="Burton O.T."/>
            <person name="Du Z."/>
            <person name="Ewing A."/>
            <person name="Godsy E."/>
            <person name="Heisel S."/>
            <person name="Houmiel K.L."/>
            <person name="Jhaveri J."/>
            <person name="Lu J."/>
            <person name="Miller N.M."/>
            <person name="Norton S."/>
            <person name="Chen Q."/>
            <person name="Phoolcharoen W."/>
            <person name="Ohlin V."/>
            <person name="Ondrusek D."/>
            <person name="Pride N."/>
            <person name="Stricklin S.L."/>
            <person name="Sun J."/>
            <person name="Wheeler C."/>
            <person name="Wilson L."/>
            <person name="Zhu H."/>
            <person name="Wood D.W."/>
        </authorList>
    </citation>
    <scope>NUCLEOTIDE SEQUENCE [LARGE SCALE GENOMIC DNA]</scope>
    <source>
        <strain>K84 / ATCC BAA-868</strain>
    </source>
</reference>
<keyword id="KW-0067">ATP-binding</keyword>
<keyword id="KW-0143">Chaperone</keyword>
<keyword id="KW-0963">Cytoplasm</keyword>
<keyword id="KW-0547">Nucleotide-binding</keyword>
<keyword id="KW-0346">Stress response</keyword>
<accession>B9JG71</accession>
<protein>
    <recommendedName>
        <fullName evidence="1">ATP-dependent protease ATPase subunit HslU</fullName>
    </recommendedName>
    <alternativeName>
        <fullName evidence="1">Unfoldase HslU</fullName>
    </alternativeName>
</protein>
<organism>
    <name type="scientific">Rhizobium rhizogenes (strain K84 / ATCC BAA-868)</name>
    <name type="common">Agrobacterium radiobacter</name>
    <dbReference type="NCBI Taxonomy" id="311403"/>
    <lineage>
        <taxon>Bacteria</taxon>
        <taxon>Pseudomonadati</taxon>
        <taxon>Pseudomonadota</taxon>
        <taxon>Alphaproteobacteria</taxon>
        <taxon>Hyphomicrobiales</taxon>
        <taxon>Rhizobiaceae</taxon>
        <taxon>Rhizobium/Agrobacterium group</taxon>
        <taxon>Rhizobium</taxon>
    </lineage>
</organism>
<name>HSLU_RHIR8</name>